<organism>
    <name type="scientific">Anaplasma phagocytophilum (strain HZ)</name>
    <dbReference type="NCBI Taxonomy" id="212042"/>
    <lineage>
        <taxon>Bacteria</taxon>
        <taxon>Pseudomonadati</taxon>
        <taxon>Pseudomonadota</taxon>
        <taxon>Alphaproteobacteria</taxon>
        <taxon>Rickettsiales</taxon>
        <taxon>Anaplasmataceae</taxon>
        <taxon>Anaplasma</taxon>
        <taxon>phagocytophilum group</taxon>
    </lineage>
</organism>
<feature type="chain" id="PRO_0000250874" description="NADH-quinone oxidoreductase subunit I">
    <location>
        <begin position="1"/>
        <end position="164"/>
    </location>
</feature>
<feature type="domain" description="4Fe-4S ferredoxin-type 1" evidence="1">
    <location>
        <begin position="56"/>
        <end position="85"/>
    </location>
</feature>
<feature type="domain" description="4Fe-4S ferredoxin-type 2" evidence="1">
    <location>
        <begin position="95"/>
        <end position="124"/>
    </location>
</feature>
<feature type="binding site" evidence="1">
    <location>
        <position position="65"/>
    </location>
    <ligand>
        <name>[4Fe-4S] cluster</name>
        <dbReference type="ChEBI" id="CHEBI:49883"/>
        <label>1</label>
    </ligand>
</feature>
<feature type="binding site" evidence="1">
    <location>
        <position position="68"/>
    </location>
    <ligand>
        <name>[4Fe-4S] cluster</name>
        <dbReference type="ChEBI" id="CHEBI:49883"/>
        <label>1</label>
    </ligand>
</feature>
<feature type="binding site" evidence="1">
    <location>
        <position position="71"/>
    </location>
    <ligand>
        <name>[4Fe-4S] cluster</name>
        <dbReference type="ChEBI" id="CHEBI:49883"/>
        <label>1</label>
    </ligand>
</feature>
<feature type="binding site" evidence="1">
    <location>
        <position position="75"/>
    </location>
    <ligand>
        <name>[4Fe-4S] cluster</name>
        <dbReference type="ChEBI" id="CHEBI:49883"/>
        <label>2</label>
    </ligand>
</feature>
<feature type="binding site" evidence="1">
    <location>
        <position position="104"/>
    </location>
    <ligand>
        <name>[4Fe-4S] cluster</name>
        <dbReference type="ChEBI" id="CHEBI:49883"/>
        <label>2</label>
    </ligand>
</feature>
<feature type="binding site" evidence="1">
    <location>
        <position position="107"/>
    </location>
    <ligand>
        <name>[4Fe-4S] cluster</name>
        <dbReference type="ChEBI" id="CHEBI:49883"/>
        <label>2</label>
    </ligand>
</feature>
<feature type="binding site" evidence="1">
    <location>
        <position position="110"/>
    </location>
    <ligand>
        <name>[4Fe-4S] cluster</name>
        <dbReference type="ChEBI" id="CHEBI:49883"/>
        <label>2</label>
    </ligand>
</feature>
<feature type="binding site" evidence="1">
    <location>
        <position position="114"/>
    </location>
    <ligand>
        <name>[4Fe-4S] cluster</name>
        <dbReference type="ChEBI" id="CHEBI:49883"/>
        <label>1</label>
    </ligand>
</feature>
<evidence type="ECO:0000255" key="1">
    <source>
        <dbReference type="HAMAP-Rule" id="MF_01351"/>
    </source>
</evidence>
<dbReference type="EC" id="7.1.1.-" evidence="1"/>
<dbReference type="EMBL" id="CP000235">
    <property type="protein sequence ID" value="ABD44065.1"/>
    <property type="molecule type" value="Genomic_DNA"/>
</dbReference>
<dbReference type="RefSeq" id="WP_011450897.1">
    <property type="nucleotide sequence ID" value="NC_007797.1"/>
</dbReference>
<dbReference type="SMR" id="Q2GJS3"/>
<dbReference type="STRING" id="212042.APH_0801"/>
<dbReference type="PaxDb" id="212042-APH_0801"/>
<dbReference type="EnsemblBacteria" id="ABD44065">
    <property type="protein sequence ID" value="ABD44065"/>
    <property type="gene ID" value="APH_0801"/>
</dbReference>
<dbReference type="GeneID" id="92748180"/>
<dbReference type="KEGG" id="aph:APH_0801"/>
<dbReference type="eggNOG" id="COG1143">
    <property type="taxonomic scope" value="Bacteria"/>
</dbReference>
<dbReference type="HOGENOM" id="CLU_067218_5_1_5"/>
<dbReference type="Proteomes" id="UP000001943">
    <property type="component" value="Chromosome"/>
</dbReference>
<dbReference type="GO" id="GO:0005886">
    <property type="term" value="C:plasma membrane"/>
    <property type="evidence" value="ECO:0007669"/>
    <property type="project" value="UniProtKB-SubCell"/>
</dbReference>
<dbReference type="GO" id="GO:0051539">
    <property type="term" value="F:4 iron, 4 sulfur cluster binding"/>
    <property type="evidence" value="ECO:0007669"/>
    <property type="project" value="UniProtKB-KW"/>
</dbReference>
<dbReference type="GO" id="GO:0005506">
    <property type="term" value="F:iron ion binding"/>
    <property type="evidence" value="ECO:0007669"/>
    <property type="project" value="UniProtKB-UniRule"/>
</dbReference>
<dbReference type="GO" id="GO:0050136">
    <property type="term" value="F:NADH:ubiquinone reductase (non-electrogenic) activity"/>
    <property type="evidence" value="ECO:0007669"/>
    <property type="project" value="UniProtKB-UniRule"/>
</dbReference>
<dbReference type="GO" id="GO:0048038">
    <property type="term" value="F:quinone binding"/>
    <property type="evidence" value="ECO:0007669"/>
    <property type="project" value="UniProtKB-KW"/>
</dbReference>
<dbReference type="GO" id="GO:0009060">
    <property type="term" value="P:aerobic respiration"/>
    <property type="evidence" value="ECO:0007669"/>
    <property type="project" value="TreeGrafter"/>
</dbReference>
<dbReference type="FunFam" id="3.30.70.3270:FF:000001">
    <property type="entry name" value="NADH-quinone oxidoreductase subunit I 1"/>
    <property type="match status" value="1"/>
</dbReference>
<dbReference type="Gene3D" id="3.30.70.3270">
    <property type="match status" value="1"/>
</dbReference>
<dbReference type="HAMAP" id="MF_01351">
    <property type="entry name" value="NDH1_NuoI"/>
    <property type="match status" value="1"/>
</dbReference>
<dbReference type="InterPro" id="IPR017896">
    <property type="entry name" value="4Fe4S_Fe-S-bd"/>
</dbReference>
<dbReference type="InterPro" id="IPR017900">
    <property type="entry name" value="4Fe4S_Fe_S_CS"/>
</dbReference>
<dbReference type="InterPro" id="IPR010226">
    <property type="entry name" value="NADH_quinone_OxRdtase_chainI"/>
</dbReference>
<dbReference type="NCBIfam" id="TIGR01971">
    <property type="entry name" value="NuoI"/>
    <property type="match status" value="1"/>
</dbReference>
<dbReference type="NCBIfam" id="NF004538">
    <property type="entry name" value="PRK05888.1-4"/>
    <property type="match status" value="1"/>
</dbReference>
<dbReference type="NCBIfam" id="NF004539">
    <property type="entry name" value="PRK05888.1-5"/>
    <property type="match status" value="1"/>
</dbReference>
<dbReference type="PANTHER" id="PTHR10849:SF20">
    <property type="entry name" value="NADH DEHYDROGENASE [UBIQUINONE] IRON-SULFUR PROTEIN 8, MITOCHONDRIAL"/>
    <property type="match status" value="1"/>
</dbReference>
<dbReference type="PANTHER" id="PTHR10849">
    <property type="entry name" value="NADH DEHYDROGENASE UBIQUINONE IRON-SULFUR PROTEIN 8, MITOCHONDRIAL"/>
    <property type="match status" value="1"/>
</dbReference>
<dbReference type="Pfam" id="PF12838">
    <property type="entry name" value="Fer4_7"/>
    <property type="match status" value="1"/>
</dbReference>
<dbReference type="SUPFAM" id="SSF54862">
    <property type="entry name" value="4Fe-4S ferredoxins"/>
    <property type="match status" value="1"/>
</dbReference>
<dbReference type="PROSITE" id="PS00198">
    <property type="entry name" value="4FE4S_FER_1"/>
    <property type="match status" value="2"/>
</dbReference>
<dbReference type="PROSITE" id="PS51379">
    <property type="entry name" value="4FE4S_FER_2"/>
    <property type="match status" value="2"/>
</dbReference>
<comment type="function">
    <text evidence="1">NDH-1 shuttles electrons from NADH, via FMN and iron-sulfur (Fe-S) centers, to quinones in the respiratory chain. The immediate electron acceptor for the enzyme in this species is believed to be ubiquinone. Couples the redox reaction to proton translocation (for every two electrons transferred, four hydrogen ions are translocated across the cytoplasmic membrane), and thus conserves the redox energy in a proton gradient.</text>
</comment>
<comment type="catalytic activity">
    <reaction evidence="1">
        <text>a quinone + NADH + 5 H(+)(in) = a quinol + NAD(+) + 4 H(+)(out)</text>
        <dbReference type="Rhea" id="RHEA:57888"/>
        <dbReference type="ChEBI" id="CHEBI:15378"/>
        <dbReference type="ChEBI" id="CHEBI:24646"/>
        <dbReference type="ChEBI" id="CHEBI:57540"/>
        <dbReference type="ChEBI" id="CHEBI:57945"/>
        <dbReference type="ChEBI" id="CHEBI:132124"/>
    </reaction>
</comment>
<comment type="cofactor">
    <cofactor evidence="1">
        <name>[4Fe-4S] cluster</name>
        <dbReference type="ChEBI" id="CHEBI:49883"/>
    </cofactor>
    <text evidence="1">Binds 2 [4Fe-4S] clusters per subunit.</text>
</comment>
<comment type="subunit">
    <text evidence="1">NDH-1 is composed of 14 different subunits. Subunits NuoA, H, J, K, L, M, N constitute the membrane sector of the complex.</text>
</comment>
<comment type="subcellular location">
    <subcellularLocation>
        <location evidence="1">Cell inner membrane</location>
        <topology evidence="1">Peripheral membrane protein</topology>
    </subcellularLocation>
</comment>
<comment type="similarity">
    <text evidence="1">Belongs to the complex I 23 kDa subunit family.</text>
</comment>
<accession>Q2GJS3</accession>
<protein>
    <recommendedName>
        <fullName evidence="1">NADH-quinone oxidoreductase subunit I</fullName>
        <ecNumber evidence="1">7.1.1.-</ecNumber>
    </recommendedName>
    <alternativeName>
        <fullName evidence="1">NADH dehydrogenase I subunit I</fullName>
    </alternativeName>
    <alternativeName>
        <fullName evidence="1">NDH-1 subunit I</fullName>
    </alternativeName>
</protein>
<reference key="1">
    <citation type="journal article" date="2006" name="PLoS Genet.">
        <title>Comparative genomics of emerging human ehrlichiosis agents.</title>
        <authorList>
            <person name="Dunning Hotopp J.C."/>
            <person name="Lin M."/>
            <person name="Madupu R."/>
            <person name="Crabtree J."/>
            <person name="Angiuoli S.V."/>
            <person name="Eisen J.A."/>
            <person name="Seshadri R."/>
            <person name="Ren Q."/>
            <person name="Wu M."/>
            <person name="Utterback T.R."/>
            <person name="Smith S."/>
            <person name="Lewis M."/>
            <person name="Khouri H."/>
            <person name="Zhang C."/>
            <person name="Niu H."/>
            <person name="Lin Q."/>
            <person name="Ohashi N."/>
            <person name="Zhi N."/>
            <person name="Nelson W.C."/>
            <person name="Brinkac L.M."/>
            <person name="Dodson R.J."/>
            <person name="Rosovitz M.J."/>
            <person name="Sundaram J.P."/>
            <person name="Daugherty S.C."/>
            <person name="Davidsen T."/>
            <person name="Durkin A.S."/>
            <person name="Gwinn M.L."/>
            <person name="Haft D.H."/>
            <person name="Selengut J.D."/>
            <person name="Sullivan S.A."/>
            <person name="Zafar N."/>
            <person name="Zhou L."/>
            <person name="Benahmed F."/>
            <person name="Forberger H."/>
            <person name="Halpin R."/>
            <person name="Mulligan S."/>
            <person name="Robinson J."/>
            <person name="White O."/>
            <person name="Rikihisa Y."/>
            <person name="Tettelin H."/>
        </authorList>
    </citation>
    <scope>NUCLEOTIDE SEQUENCE [LARGE SCALE GENOMIC DNA]</scope>
    <source>
        <strain>HZ</strain>
    </source>
</reference>
<keyword id="KW-0004">4Fe-4S</keyword>
<keyword id="KW-0997">Cell inner membrane</keyword>
<keyword id="KW-1003">Cell membrane</keyword>
<keyword id="KW-0408">Iron</keyword>
<keyword id="KW-0411">Iron-sulfur</keyword>
<keyword id="KW-0472">Membrane</keyword>
<keyword id="KW-0479">Metal-binding</keyword>
<keyword id="KW-0520">NAD</keyword>
<keyword id="KW-0874">Quinone</keyword>
<keyword id="KW-0677">Repeat</keyword>
<keyword id="KW-1278">Translocase</keyword>
<keyword id="KW-0830">Ubiquinone</keyword>
<proteinExistence type="inferred from homology"/>
<gene>
    <name evidence="1" type="primary">nuoI</name>
    <name type="ordered locus">APH_0801</name>
</gene>
<sequence>MLYCVQFGRRVIRLVSATVHGFFLTLLAMFKPKVTLRYPHEKGPLSTRFRGEHALRRYESGEERCIACKLCEAICPAQAITIEAEERSDGSRRTTRYDIDMTKCIYCGFCQEACPVDAIVEGPNFEYSTETREELMYNKEKLLANGDIWEEALRYRIKKNQPYY</sequence>
<name>NUOI_ANAPZ</name>